<accession>Q3SSP7</accession>
<organism>
    <name type="scientific">Nitrobacter winogradskyi (strain ATCC 25391 / DSM 10237 / CIP 104748 / NCIMB 11846 / Nb-255)</name>
    <dbReference type="NCBI Taxonomy" id="323098"/>
    <lineage>
        <taxon>Bacteria</taxon>
        <taxon>Pseudomonadati</taxon>
        <taxon>Pseudomonadota</taxon>
        <taxon>Alphaproteobacteria</taxon>
        <taxon>Hyphomicrobiales</taxon>
        <taxon>Nitrobacteraceae</taxon>
        <taxon>Nitrobacter</taxon>
    </lineage>
</organism>
<feature type="chain" id="PRO_0000356587" description="Large ribosomal subunit protein bL33">
    <location>
        <begin position="1"/>
        <end position="55"/>
    </location>
</feature>
<evidence type="ECO:0000305" key="1"/>
<proteinExistence type="inferred from homology"/>
<dbReference type="EMBL" id="CP000115">
    <property type="protein sequence ID" value="ABA04694.1"/>
    <property type="molecule type" value="Genomic_DNA"/>
</dbReference>
<dbReference type="RefSeq" id="WP_006611239.1">
    <property type="nucleotide sequence ID" value="NC_007406.1"/>
</dbReference>
<dbReference type="SMR" id="Q3SSP7"/>
<dbReference type="STRING" id="323098.Nwi_1433"/>
<dbReference type="KEGG" id="nwi:Nwi_1433"/>
<dbReference type="eggNOG" id="COG0267">
    <property type="taxonomic scope" value="Bacteria"/>
</dbReference>
<dbReference type="HOGENOM" id="CLU_190949_1_1_5"/>
<dbReference type="OrthoDB" id="21586at2"/>
<dbReference type="Proteomes" id="UP000002531">
    <property type="component" value="Chromosome"/>
</dbReference>
<dbReference type="GO" id="GO:0022625">
    <property type="term" value="C:cytosolic large ribosomal subunit"/>
    <property type="evidence" value="ECO:0007669"/>
    <property type="project" value="TreeGrafter"/>
</dbReference>
<dbReference type="GO" id="GO:0003735">
    <property type="term" value="F:structural constituent of ribosome"/>
    <property type="evidence" value="ECO:0007669"/>
    <property type="project" value="InterPro"/>
</dbReference>
<dbReference type="GO" id="GO:0006412">
    <property type="term" value="P:translation"/>
    <property type="evidence" value="ECO:0007669"/>
    <property type="project" value="UniProtKB-UniRule"/>
</dbReference>
<dbReference type="FunFam" id="2.20.28.120:FF:000003">
    <property type="entry name" value="50S ribosomal protein L33"/>
    <property type="match status" value="1"/>
</dbReference>
<dbReference type="Gene3D" id="2.20.28.120">
    <property type="entry name" value="Ribosomal protein L33"/>
    <property type="match status" value="1"/>
</dbReference>
<dbReference type="InterPro" id="IPR001705">
    <property type="entry name" value="Ribosomal_bL33"/>
</dbReference>
<dbReference type="InterPro" id="IPR038584">
    <property type="entry name" value="Ribosomal_bL33_sf"/>
</dbReference>
<dbReference type="InterPro" id="IPR011332">
    <property type="entry name" value="Ribosomal_zn-bd"/>
</dbReference>
<dbReference type="NCBIfam" id="NF001860">
    <property type="entry name" value="PRK00595.1"/>
    <property type="match status" value="1"/>
</dbReference>
<dbReference type="NCBIfam" id="TIGR01023">
    <property type="entry name" value="rpmG_bact"/>
    <property type="match status" value="1"/>
</dbReference>
<dbReference type="PANTHER" id="PTHR15238">
    <property type="entry name" value="54S RIBOSOMAL PROTEIN L39, MITOCHONDRIAL"/>
    <property type="match status" value="1"/>
</dbReference>
<dbReference type="PANTHER" id="PTHR15238:SF1">
    <property type="entry name" value="LARGE RIBOSOMAL SUBUNIT PROTEIN BL33M"/>
    <property type="match status" value="1"/>
</dbReference>
<dbReference type="Pfam" id="PF00471">
    <property type="entry name" value="Ribosomal_L33"/>
    <property type="match status" value="1"/>
</dbReference>
<dbReference type="SUPFAM" id="SSF57829">
    <property type="entry name" value="Zn-binding ribosomal proteins"/>
    <property type="match status" value="1"/>
</dbReference>
<comment type="similarity">
    <text evidence="1">Belongs to the bacterial ribosomal protein bL33 family.</text>
</comment>
<gene>
    <name type="primary">rpmG</name>
    <name type="ordered locus">Nwi_1433</name>
</gene>
<name>RL33_NITWN</name>
<reference key="1">
    <citation type="journal article" date="2006" name="Appl. Environ. Microbiol.">
        <title>Genome sequence of the chemolithoautotrophic nitrite-oxidizing bacterium Nitrobacter winogradskyi Nb-255.</title>
        <authorList>
            <person name="Starkenburg S.R."/>
            <person name="Chain P.S.G."/>
            <person name="Sayavedra-Soto L.A."/>
            <person name="Hauser L."/>
            <person name="Land M.L."/>
            <person name="Larimer F.W."/>
            <person name="Malfatti S.A."/>
            <person name="Klotz M.G."/>
            <person name="Bottomley P.J."/>
            <person name="Arp D.J."/>
            <person name="Hickey W.J."/>
        </authorList>
    </citation>
    <scope>NUCLEOTIDE SEQUENCE [LARGE SCALE GENOMIC DNA]</scope>
    <source>
        <strain>ATCC 25391 / DSM 10237 / CIP 104748 / NCIMB 11846 / Nb-255</strain>
    </source>
</reference>
<protein>
    <recommendedName>
        <fullName evidence="1">Large ribosomal subunit protein bL33</fullName>
    </recommendedName>
    <alternativeName>
        <fullName>50S ribosomal protein L33</fullName>
    </alternativeName>
</protein>
<sequence length="55" mass="6337">MAKAVTIKVKLVSSADTGFYYVAKKNSRTMTDKMVKKKYDPVARKHVEFREAKIK</sequence>
<keyword id="KW-1185">Reference proteome</keyword>
<keyword id="KW-0687">Ribonucleoprotein</keyword>
<keyword id="KW-0689">Ribosomal protein</keyword>